<accession>Q98HR4</accession>
<reference key="1">
    <citation type="journal article" date="2000" name="DNA Res.">
        <title>Complete genome structure of the nitrogen-fixing symbiotic bacterium Mesorhizobium loti.</title>
        <authorList>
            <person name="Kaneko T."/>
            <person name="Nakamura Y."/>
            <person name="Sato S."/>
            <person name="Asamizu E."/>
            <person name="Kato T."/>
            <person name="Sasamoto S."/>
            <person name="Watanabe A."/>
            <person name="Idesawa K."/>
            <person name="Ishikawa A."/>
            <person name="Kawashima K."/>
            <person name="Kimura T."/>
            <person name="Kishida Y."/>
            <person name="Kiyokawa C."/>
            <person name="Kohara M."/>
            <person name="Matsumoto M."/>
            <person name="Matsuno A."/>
            <person name="Mochizuki Y."/>
            <person name="Nakayama S."/>
            <person name="Nakazaki N."/>
            <person name="Shimpo S."/>
            <person name="Sugimoto M."/>
            <person name="Takeuchi C."/>
            <person name="Yamada M."/>
            <person name="Tabata S."/>
        </authorList>
    </citation>
    <scope>NUCLEOTIDE SEQUENCE [LARGE SCALE GENOMIC DNA]</scope>
    <source>
        <strain>LMG 29417 / CECT 9101 / MAFF 303099</strain>
    </source>
</reference>
<sequence>MAKLYFNYATMNAGKTTMLLQASYNYRERGMTTMLFVAGHYRKGDSGLISSRIGLETEAEMFRDGDDLFARVAEHHDHTTVHCVFVDEAQFLEEEQVWQLARIADRLNIPVMCYGLRTDFQGKLFSGSRALLAIADDLREVRTICRCGRKATMVVRLGADGKVARQGEQVAIGKDVYVSLCRRHWEEEMGRAAPDDFIGFMKS</sequence>
<proteinExistence type="inferred from homology"/>
<gene>
    <name evidence="1" type="primary">tdk</name>
    <name type="ordered locus">mlr2747</name>
</gene>
<evidence type="ECO:0000255" key="1">
    <source>
        <dbReference type="HAMAP-Rule" id="MF_00124"/>
    </source>
</evidence>
<feature type="chain" id="PRO_0000175007" description="Thymidine kinase">
    <location>
        <begin position="1"/>
        <end position="203"/>
    </location>
</feature>
<feature type="active site" description="Proton acceptor" evidence="1">
    <location>
        <position position="88"/>
    </location>
</feature>
<feature type="binding site" evidence="1">
    <location>
        <begin position="9"/>
        <end position="16"/>
    </location>
    <ligand>
        <name>ATP</name>
        <dbReference type="ChEBI" id="CHEBI:30616"/>
    </ligand>
</feature>
<feature type="binding site" evidence="1">
    <location>
        <begin position="87"/>
        <end position="90"/>
    </location>
    <ligand>
        <name>ATP</name>
        <dbReference type="ChEBI" id="CHEBI:30616"/>
    </ligand>
</feature>
<feature type="binding site" evidence="1">
    <location>
        <position position="145"/>
    </location>
    <ligand>
        <name>Zn(2+)</name>
        <dbReference type="ChEBI" id="CHEBI:29105"/>
    </ligand>
</feature>
<feature type="binding site" evidence="1">
    <location>
        <position position="147"/>
    </location>
    <ligand>
        <name>Zn(2+)</name>
        <dbReference type="ChEBI" id="CHEBI:29105"/>
    </ligand>
</feature>
<feature type="binding site" evidence="1">
    <location>
        <position position="181"/>
    </location>
    <ligand>
        <name>Zn(2+)</name>
        <dbReference type="ChEBI" id="CHEBI:29105"/>
    </ligand>
</feature>
<feature type="binding site" evidence="1">
    <location>
        <position position="184"/>
    </location>
    <ligand>
        <name>Zn(2+)</name>
        <dbReference type="ChEBI" id="CHEBI:29105"/>
    </ligand>
</feature>
<organism>
    <name type="scientific">Mesorhizobium japonicum (strain LMG 29417 / CECT 9101 / MAFF 303099)</name>
    <name type="common">Mesorhizobium loti (strain MAFF 303099)</name>
    <dbReference type="NCBI Taxonomy" id="266835"/>
    <lineage>
        <taxon>Bacteria</taxon>
        <taxon>Pseudomonadati</taxon>
        <taxon>Pseudomonadota</taxon>
        <taxon>Alphaproteobacteria</taxon>
        <taxon>Hyphomicrobiales</taxon>
        <taxon>Phyllobacteriaceae</taxon>
        <taxon>Mesorhizobium</taxon>
    </lineage>
</organism>
<name>KITH_RHILO</name>
<protein>
    <recommendedName>
        <fullName evidence="1">Thymidine kinase</fullName>
        <ecNumber evidence="1">2.7.1.21</ecNumber>
    </recommendedName>
</protein>
<comment type="catalytic activity">
    <reaction evidence="1">
        <text>thymidine + ATP = dTMP + ADP + H(+)</text>
        <dbReference type="Rhea" id="RHEA:19129"/>
        <dbReference type="ChEBI" id="CHEBI:15378"/>
        <dbReference type="ChEBI" id="CHEBI:17748"/>
        <dbReference type="ChEBI" id="CHEBI:30616"/>
        <dbReference type="ChEBI" id="CHEBI:63528"/>
        <dbReference type="ChEBI" id="CHEBI:456216"/>
        <dbReference type="EC" id="2.7.1.21"/>
    </reaction>
</comment>
<comment type="subunit">
    <text evidence="1">Homotetramer.</text>
</comment>
<comment type="subcellular location">
    <subcellularLocation>
        <location evidence="1">Cytoplasm</location>
    </subcellularLocation>
</comment>
<comment type="similarity">
    <text evidence="1">Belongs to the thymidine kinase family.</text>
</comment>
<keyword id="KW-0067">ATP-binding</keyword>
<keyword id="KW-0963">Cytoplasm</keyword>
<keyword id="KW-0237">DNA synthesis</keyword>
<keyword id="KW-0418">Kinase</keyword>
<keyword id="KW-0479">Metal-binding</keyword>
<keyword id="KW-0547">Nucleotide-binding</keyword>
<keyword id="KW-0808">Transferase</keyword>
<keyword id="KW-0862">Zinc</keyword>
<dbReference type="EC" id="2.7.1.21" evidence="1"/>
<dbReference type="EMBL" id="BA000012">
    <property type="protein sequence ID" value="BAB49802.1"/>
    <property type="molecule type" value="Genomic_DNA"/>
</dbReference>
<dbReference type="RefSeq" id="WP_010911151.1">
    <property type="nucleotide sequence ID" value="NC_002678.2"/>
</dbReference>
<dbReference type="SMR" id="Q98HR4"/>
<dbReference type="KEGG" id="mlo:mlr2747"/>
<dbReference type="eggNOG" id="COG1435">
    <property type="taxonomic scope" value="Bacteria"/>
</dbReference>
<dbReference type="HOGENOM" id="CLU_064400_2_1_5"/>
<dbReference type="Proteomes" id="UP000000552">
    <property type="component" value="Chromosome"/>
</dbReference>
<dbReference type="GO" id="GO:0005829">
    <property type="term" value="C:cytosol"/>
    <property type="evidence" value="ECO:0007669"/>
    <property type="project" value="TreeGrafter"/>
</dbReference>
<dbReference type="GO" id="GO:0005524">
    <property type="term" value="F:ATP binding"/>
    <property type="evidence" value="ECO:0007669"/>
    <property type="project" value="UniProtKB-UniRule"/>
</dbReference>
<dbReference type="GO" id="GO:0004797">
    <property type="term" value="F:thymidine kinase activity"/>
    <property type="evidence" value="ECO:0007669"/>
    <property type="project" value="UniProtKB-UniRule"/>
</dbReference>
<dbReference type="GO" id="GO:0008270">
    <property type="term" value="F:zinc ion binding"/>
    <property type="evidence" value="ECO:0007669"/>
    <property type="project" value="UniProtKB-UniRule"/>
</dbReference>
<dbReference type="GO" id="GO:0071897">
    <property type="term" value="P:DNA biosynthetic process"/>
    <property type="evidence" value="ECO:0007669"/>
    <property type="project" value="UniProtKB-KW"/>
</dbReference>
<dbReference type="GO" id="GO:0046104">
    <property type="term" value="P:thymidine metabolic process"/>
    <property type="evidence" value="ECO:0007669"/>
    <property type="project" value="TreeGrafter"/>
</dbReference>
<dbReference type="Gene3D" id="3.30.60.20">
    <property type="match status" value="1"/>
</dbReference>
<dbReference type="Gene3D" id="3.40.50.300">
    <property type="entry name" value="P-loop containing nucleotide triphosphate hydrolases"/>
    <property type="match status" value="1"/>
</dbReference>
<dbReference type="HAMAP" id="MF_00124">
    <property type="entry name" value="Thymidine_kinase"/>
    <property type="match status" value="1"/>
</dbReference>
<dbReference type="InterPro" id="IPR027417">
    <property type="entry name" value="P-loop_NTPase"/>
</dbReference>
<dbReference type="InterPro" id="IPR001267">
    <property type="entry name" value="Thymidine_kinase"/>
</dbReference>
<dbReference type="InterPro" id="IPR020633">
    <property type="entry name" value="Thymidine_kinase_CS"/>
</dbReference>
<dbReference type="NCBIfam" id="NF003300">
    <property type="entry name" value="PRK04296.1-5"/>
    <property type="match status" value="1"/>
</dbReference>
<dbReference type="PANTHER" id="PTHR11441">
    <property type="entry name" value="THYMIDINE KINASE"/>
    <property type="match status" value="1"/>
</dbReference>
<dbReference type="PANTHER" id="PTHR11441:SF0">
    <property type="entry name" value="THYMIDINE KINASE, CYTOSOLIC"/>
    <property type="match status" value="1"/>
</dbReference>
<dbReference type="Pfam" id="PF00265">
    <property type="entry name" value="TK"/>
    <property type="match status" value="1"/>
</dbReference>
<dbReference type="PIRSF" id="PIRSF035805">
    <property type="entry name" value="TK_cell"/>
    <property type="match status" value="1"/>
</dbReference>
<dbReference type="SUPFAM" id="SSF57716">
    <property type="entry name" value="Glucocorticoid receptor-like (DNA-binding domain)"/>
    <property type="match status" value="1"/>
</dbReference>
<dbReference type="SUPFAM" id="SSF52540">
    <property type="entry name" value="P-loop containing nucleoside triphosphate hydrolases"/>
    <property type="match status" value="1"/>
</dbReference>
<dbReference type="PROSITE" id="PS00603">
    <property type="entry name" value="TK_CELLULAR_TYPE"/>
    <property type="match status" value="1"/>
</dbReference>